<sequence>MSEAGTPEAPIKKKRPPVKEEDLKGARGSLSKNQEIKSKTYQVMRDYEQAGSAAPSIFSRNRTGTETVFEKPKEGPAKSVFG</sequence>
<protein>
    <recommendedName>
        <fullName>Musculoskeletal embryonic nuclear protein 1</fullName>
    </recommendedName>
    <alternativeName>
        <fullName>Fracture callus protein MUSTANG</fullName>
    </alternativeName>
    <alternativeName>
        <fullName>Musculoskeletal temporally activated novel gene protein</fullName>
    </alternativeName>
</protein>
<proteinExistence type="evidence at protein level"/>
<gene>
    <name type="primary">Mustn1</name>
</gene>
<keyword id="KW-0891">Chondrogenesis</keyword>
<keyword id="KW-0963">Cytoplasm</keyword>
<keyword id="KW-0517">Myogenesis</keyword>
<keyword id="KW-0539">Nucleus</keyword>
<keyword id="KW-0597">Phosphoprotein</keyword>
<keyword id="KW-1185">Reference proteome</keyword>
<keyword id="KW-0964">Secreted</keyword>
<feature type="chain" id="PRO_0000299449" description="Musculoskeletal embryonic nuclear protein 1">
    <location>
        <begin position="1"/>
        <end position="82"/>
    </location>
</feature>
<feature type="region of interest" description="Disordered" evidence="3">
    <location>
        <begin position="1"/>
        <end position="37"/>
    </location>
</feature>
<feature type="region of interest" description="Disordered" evidence="3">
    <location>
        <begin position="51"/>
        <end position="82"/>
    </location>
</feature>
<feature type="short sequence motif" description="Nuclear localization signal" evidence="2">
    <location>
        <begin position="10"/>
        <end position="18"/>
    </location>
</feature>
<feature type="modified residue" description="Phosphoserine" evidence="6">
    <location>
        <position position="2"/>
    </location>
</feature>
<feature type="modified residue" description="Phosphothreonine" evidence="6">
    <location>
        <position position="6"/>
    </location>
</feature>
<name>MSTN1_RAT</name>
<comment type="function">
    <text evidence="1">Required for chondrocyte development and proliferation. Plays a role in myoblast differentiation and fusion. Modulates skeletal muscle extracellular matrix composition. Plays a role in skeletal muscle function. Plays a role in glucose homeostasis.</text>
</comment>
<comment type="subcellular location">
    <subcellularLocation>
        <location evidence="4">Nucleus</location>
    </subcellularLocation>
    <subcellularLocation>
        <location evidence="1">Nucleus</location>
    </subcellularLocation>
    <subcellularLocation>
        <location evidence="1">Cytoplasm</location>
    </subcellularLocation>
    <subcellularLocation>
        <location evidence="1">Secreted</location>
        <location evidence="1">Extracellular space</location>
    </subcellularLocation>
    <text evidence="1">Secreted from smooth muscle cells into the muscle extracellular space.</text>
</comment>
<comment type="tissue specificity">
    <text evidence="4">Expressed specifically in the musculoskeletal system (skeletal muscle and tendon). Highly expressed during bone regeneration, especially during the early phases (post fracure days 3 and 5). Expression within the fracture callus is localized in osteoprogenitor cells of the periosteum, proliferating chondrocytes, and young active osteoblasts.</text>
</comment>
<comment type="developmental stage">
    <text evidence="4">Abundantly expressed in developing embryos, especially in mesenchymal condensations of limbs, vertebral perichondrium and mesenchymal cells of the intervertebral disks.</text>
</comment>
<comment type="similarity">
    <text evidence="5">Belongs to the MUSTN1 family.</text>
</comment>
<accession>Q80XX4</accession>
<dbReference type="EMBL" id="AY254906">
    <property type="protein sequence ID" value="AAP12535.1"/>
    <property type="molecule type" value="mRNA"/>
</dbReference>
<dbReference type="RefSeq" id="NP_852033.1">
    <property type="nucleotide sequence ID" value="NM_181368.4"/>
</dbReference>
<dbReference type="SMR" id="Q80XX4"/>
<dbReference type="FunCoup" id="Q80XX4">
    <property type="interactions" value="5"/>
</dbReference>
<dbReference type="STRING" id="10116.ENSRNOP00000023330"/>
<dbReference type="iPTMnet" id="Q80XX4"/>
<dbReference type="PhosphoSitePlus" id="Q80XX4"/>
<dbReference type="PaxDb" id="10116-ENSRNOP00000023330"/>
<dbReference type="Ensembl" id="ENSRNOT00000023330.7">
    <property type="protein sequence ID" value="ENSRNOP00000023330.4"/>
    <property type="gene ID" value="ENSRNOG00000017369.7"/>
</dbReference>
<dbReference type="GeneID" id="290553"/>
<dbReference type="KEGG" id="rno:290553"/>
<dbReference type="UCSC" id="RGD:727804">
    <property type="organism name" value="rat"/>
</dbReference>
<dbReference type="AGR" id="RGD:727804"/>
<dbReference type="CTD" id="389125"/>
<dbReference type="RGD" id="727804">
    <property type="gene designation" value="Mustn1"/>
</dbReference>
<dbReference type="eggNOG" id="ENOG502S75P">
    <property type="taxonomic scope" value="Eukaryota"/>
</dbReference>
<dbReference type="GeneTree" id="ENSGT00940000153920"/>
<dbReference type="HOGENOM" id="CLU_193377_0_0_1"/>
<dbReference type="InParanoid" id="Q80XX4"/>
<dbReference type="OrthoDB" id="9976882at2759"/>
<dbReference type="PhylomeDB" id="Q80XX4"/>
<dbReference type="TreeFam" id="TF330732"/>
<dbReference type="PRO" id="PR:Q80XX4"/>
<dbReference type="Proteomes" id="UP000002494">
    <property type="component" value="Chromosome 16"/>
</dbReference>
<dbReference type="Bgee" id="ENSRNOG00000017369">
    <property type="expression patterns" value="Expressed in quadriceps femoris and 19 other cell types or tissues"/>
</dbReference>
<dbReference type="ExpressionAtlas" id="Q80XX4">
    <property type="expression patterns" value="baseline and differential"/>
</dbReference>
<dbReference type="GO" id="GO:0005737">
    <property type="term" value="C:cytoplasm"/>
    <property type="evidence" value="ECO:0007669"/>
    <property type="project" value="UniProtKB-SubCell"/>
</dbReference>
<dbReference type="GO" id="GO:0005576">
    <property type="term" value="C:extracellular region"/>
    <property type="evidence" value="ECO:0007669"/>
    <property type="project" value="UniProtKB-SubCell"/>
</dbReference>
<dbReference type="GO" id="GO:0005654">
    <property type="term" value="C:nucleoplasm"/>
    <property type="evidence" value="ECO:0000314"/>
    <property type="project" value="RGD"/>
</dbReference>
<dbReference type="GO" id="GO:0005634">
    <property type="term" value="C:nucleus"/>
    <property type="evidence" value="ECO:0000314"/>
    <property type="project" value="MGI"/>
</dbReference>
<dbReference type="GO" id="GO:0002062">
    <property type="term" value="P:chondrocyte differentiation"/>
    <property type="evidence" value="ECO:0007669"/>
    <property type="project" value="InterPro"/>
</dbReference>
<dbReference type="GO" id="GO:0035988">
    <property type="term" value="P:chondrocyte proliferation"/>
    <property type="evidence" value="ECO:0007669"/>
    <property type="project" value="InterPro"/>
</dbReference>
<dbReference type="GO" id="GO:0030326">
    <property type="term" value="P:embryonic limb morphogenesis"/>
    <property type="evidence" value="ECO:0000270"/>
    <property type="project" value="RGD"/>
</dbReference>
<dbReference type="GO" id="GO:0042593">
    <property type="term" value="P:glucose homeostasis"/>
    <property type="evidence" value="ECO:0000250"/>
    <property type="project" value="UniProtKB"/>
</dbReference>
<dbReference type="GO" id="GO:0007517">
    <property type="term" value="P:muscle organ development"/>
    <property type="evidence" value="ECO:0007669"/>
    <property type="project" value="UniProtKB-KW"/>
</dbReference>
<dbReference type="GO" id="GO:0032332">
    <property type="term" value="P:positive regulation of chondrocyte differentiation"/>
    <property type="evidence" value="ECO:0000266"/>
    <property type="project" value="RGD"/>
</dbReference>
<dbReference type="GO" id="GO:1902732">
    <property type="term" value="P:positive regulation of chondrocyte proliferation"/>
    <property type="evidence" value="ECO:0000266"/>
    <property type="project" value="RGD"/>
</dbReference>
<dbReference type="GO" id="GO:0010628">
    <property type="term" value="P:positive regulation of gene expression"/>
    <property type="evidence" value="ECO:0000266"/>
    <property type="project" value="RGD"/>
</dbReference>
<dbReference type="GO" id="GO:0045663">
    <property type="term" value="P:positive regulation of myoblast differentiation"/>
    <property type="evidence" value="ECO:0000250"/>
    <property type="project" value="UniProtKB"/>
</dbReference>
<dbReference type="GO" id="GO:1902730">
    <property type="term" value="P:positive regulation of proteoglycan biosynthetic process"/>
    <property type="evidence" value="ECO:0000266"/>
    <property type="project" value="RGD"/>
</dbReference>
<dbReference type="GO" id="GO:0042246">
    <property type="term" value="P:tissue regeneration"/>
    <property type="evidence" value="ECO:0000314"/>
    <property type="project" value="RGD"/>
</dbReference>
<dbReference type="InterPro" id="IPR031394">
    <property type="entry name" value="MUSTN1"/>
</dbReference>
<dbReference type="Pfam" id="PF15682">
    <property type="entry name" value="Mustang"/>
    <property type="match status" value="1"/>
</dbReference>
<reference key="1">
    <citation type="journal article" date="2004" name="FASEB J.">
        <title>Molecular cloning and characterization of Mustang, a novel nuclear protein expressed during skeletal development and regeneration.</title>
        <authorList>
            <person name="Lombardo F."/>
            <person name="Komatsu D."/>
            <person name="Hadjiargyrou M."/>
        </authorList>
    </citation>
    <scope>NUCLEOTIDE SEQUENCE [MRNA]</scope>
    <scope>SUBCELLULAR LOCATION</scope>
    <scope>TISSUE SPECIFICITY</scope>
    <scope>DEVELOPMENTAL STAGE</scope>
    <source>
        <strain>Sprague-Dawley</strain>
    </source>
</reference>
<reference key="2">
    <citation type="journal article" date="2012" name="Nat. Commun.">
        <title>Quantitative maps of protein phosphorylation sites across 14 different rat organs and tissues.</title>
        <authorList>
            <person name="Lundby A."/>
            <person name="Secher A."/>
            <person name="Lage K."/>
            <person name="Nordsborg N.B."/>
            <person name="Dmytriyev A."/>
            <person name="Lundby C."/>
            <person name="Olsen J.V."/>
        </authorList>
    </citation>
    <scope>PHOSPHORYLATION [LARGE SCALE ANALYSIS] AT SER-2 AND THR-6</scope>
    <scope>IDENTIFICATION BY MASS SPECTROMETRY [LARGE SCALE ANALYSIS]</scope>
</reference>
<evidence type="ECO:0000250" key="1">
    <source>
        <dbReference type="UniProtKB" id="Q99JI1"/>
    </source>
</evidence>
<evidence type="ECO:0000255" key="2"/>
<evidence type="ECO:0000256" key="3">
    <source>
        <dbReference type="SAM" id="MobiDB-lite"/>
    </source>
</evidence>
<evidence type="ECO:0000269" key="4">
    <source>
    </source>
</evidence>
<evidence type="ECO:0000305" key="5"/>
<evidence type="ECO:0007744" key="6">
    <source>
    </source>
</evidence>
<organism>
    <name type="scientific">Rattus norvegicus</name>
    <name type="common">Rat</name>
    <dbReference type="NCBI Taxonomy" id="10116"/>
    <lineage>
        <taxon>Eukaryota</taxon>
        <taxon>Metazoa</taxon>
        <taxon>Chordata</taxon>
        <taxon>Craniata</taxon>
        <taxon>Vertebrata</taxon>
        <taxon>Euteleostomi</taxon>
        <taxon>Mammalia</taxon>
        <taxon>Eutheria</taxon>
        <taxon>Euarchontoglires</taxon>
        <taxon>Glires</taxon>
        <taxon>Rodentia</taxon>
        <taxon>Myomorpha</taxon>
        <taxon>Muroidea</taxon>
        <taxon>Muridae</taxon>
        <taxon>Murinae</taxon>
        <taxon>Rattus</taxon>
    </lineage>
</organism>